<name>ARGB_EHRRG</name>
<dbReference type="EC" id="2.7.2.8" evidence="1"/>
<dbReference type="EMBL" id="CR925677">
    <property type="protein sequence ID" value="CAI27912.1"/>
    <property type="molecule type" value="Genomic_DNA"/>
</dbReference>
<dbReference type="RefSeq" id="WP_011255588.1">
    <property type="nucleotide sequence ID" value="NC_006831.1"/>
</dbReference>
<dbReference type="SMR" id="Q5FGU6"/>
<dbReference type="KEGG" id="erg:ERGA_CDS_04600"/>
<dbReference type="HOGENOM" id="CLU_053680_0_0_5"/>
<dbReference type="OrthoDB" id="9803155at2"/>
<dbReference type="UniPathway" id="UPA00068">
    <property type="reaction ID" value="UER00107"/>
</dbReference>
<dbReference type="Proteomes" id="UP000000533">
    <property type="component" value="Chromosome"/>
</dbReference>
<dbReference type="GO" id="GO:0005737">
    <property type="term" value="C:cytoplasm"/>
    <property type="evidence" value="ECO:0007669"/>
    <property type="project" value="UniProtKB-SubCell"/>
</dbReference>
<dbReference type="GO" id="GO:0003991">
    <property type="term" value="F:acetylglutamate kinase activity"/>
    <property type="evidence" value="ECO:0007669"/>
    <property type="project" value="UniProtKB-UniRule"/>
</dbReference>
<dbReference type="GO" id="GO:0005524">
    <property type="term" value="F:ATP binding"/>
    <property type="evidence" value="ECO:0007669"/>
    <property type="project" value="UniProtKB-UniRule"/>
</dbReference>
<dbReference type="GO" id="GO:0042450">
    <property type="term" value="P:arginine biosynthetic process via ornithine"/>
    <property type="evidence" value="ECO:0007669"/>
    <property type="project" value="UniProtKB-UniRule"/>
</dbReference>
<dbReference type="GO" id="GO:0006526">
    <property type="term" value="P:L-arginine biosynthetic process"/>
    <property type="evidence" value="ECO:0007669"/>
    <property type="project" value="UniProtKB-UniPathway"/>
</dbReference>
<dbReference type="CDD" id="cd04250">
    <property type="entry name" value="AAK_NAGK-C"/>
    <property type="match status" value="1"/>
</dbReference>
<dbReference type="FunFam" id="3.40.1160.10:FF:000004">
    <property type="entry name" value="Acetylglutamate kinase"/>
    <property type="match status" value="1"/>
</dbReference>
<dbReference type="Gene3D" id="3.40.1160.10">
    <property type="entry name" value="Acetylglutamate kinase-like"/>
    <property type="match status" value="1"/>
</dbReference>
<dbReference type="HAMAP" id="MF_00082">
    <property type="entry name" value="ArgB"/>
    <property type="match status" value="1"/>
</dbReference>
<dbReference type="InterPro" id="IPR036393">
    <property type="entry name" value="AceGlu_kinase-like_sf"/>
</dbReference>
<dbReference type="InterPro" id="IPR004662">
    <property type="entry name" value="AcgluKinase_fam"/>
</dbReference>
<dbReference type="InterPro" id="IPR037528">
    <property type="entry name" value="ArgB"/>
</dbReference>
<dbReference type="InterPro" id="IPR001048">
    <property type="entry name" value="Asp/Glu/Uridylate_kinase"/>
</dbReference>
<dbReference type="InterPro" id="IPR041727">
    <property type="entry name" value="NAGK-C"/>
</dbReference>
<dbReference type="NCBIfam" id="TIGR00761">
    <property type="entry name" value="argB"/>
    <property type="match status" value="1"/>
</dbReference>
<dbReference type="PANTHER" id="PTHR23342">
    <property type="entry name" value="N-ACETYLGLUTAMATE SYNTHASE"/>
    <property type="match status" value="1"/>
</dbReference>
<dbReference type="PANTHER" id="PTHR23342:SF0">
    <property type="entry name" value="N-ACETYLGLUTAMATE SYNTHASE, MITOCHONDRIAL"/>
    <property type="match status" value="1"/>
</dbReference>
<dbReference type="Pfam" id="PF00696">
    <property type="entry name" value="AA_kinase"/>
    <property type="match status" value="1"/>
</dbReference>
<dbReference type="PIRSF" id="PIRSF000728">
    <property type="entry name" value="NAGK"/>
    <property type="match status" value="1"/>
</dbReference>
<dbReference type="SUPFAM" id="SSF53633">
    <property type="entry name" value="Carbamate kinase-like"/>
    <property type="match status" value="1"/>
</dbReference>
<reference key="1">
    <citation type="journal article" date="2006" name="J. Bacteriol.">
        <title>Comparative genomic analysis of three strains of Ehrlichia ruminantium reveals an active process of genome size plasticity.</title>
        <authorList>
            <person name="Frutos R."/>
            <person name="Viari A."/>
            <person name="Ferraz C."/>
            <person name="Morgat A."/>
            <person name="Eychenie S."/>
            <person name="Kandassamy Y."/>
            <person name="Chantal I."/>
            <person name="Bensaid A."/>
            <person name="Coissac E."/>
            <person name="Vachiery N."/>
            <person name="Demaille J."/>
            <person name="Martinez D."/>
        </authorList>
    </citation>
    <scope>NUCLEOTIDE SEQUENCE [LARGE SCALE GENOMIC DNA]</scope>
    <source>
        <strain>Gardel</strain>
    </source>
</reference>
<accession>Q5FGU6</accession>
<feature type="chain" id="PRO_0000264704" description="Acetylglutamate kinase">
    <location>
        <begin position="1"/>
        <end position="322"/>
    </location>
</feature>
<feature type="binding site" evidence="1">
    <location>
        <begin position="89"/>
        <end position="90"/>
    </location>
    <ligand>
        <name>substrate</name>
    </ligand>
</feature>
<feature type="binding site" evidence="1">
    <location>
        <position position="111"/>
    </location>
    <ligand>
        <name>substrate</name>
    </ligand>
</feature>
<feature type="binding site" evidence="1">
    <location>
        <position position="217"/>
    </location>
    <ligand>
        <name>substrate</name>
    </ligand>
</feature>
<feature type="site" description="Transition state stabilizer" evidence="1">
    <location>
        <position position="54"/>
    </location>
</feature>
<feature type="site" description="Transition state stabilizer" evidence="1">
    <location>
        <position position="277"/>
    </location>
</feature>
<sequence length="322" mass="34850">MKLRNVSKNNLNKEDTKLSIEQFGGNVEWFNITKTLSESLPYIQQFSGETFIIKYGGAAMTDKKLAESFAHDVVLLKQLGINPIVVHGGGNKINEFLEKINKKSTFINGLRITDAETLEIVEMVLCGLVNKNITQLINNAGGNAIGLCGKDANLIEAKKICYTYKENQSNNVEKILDMGFVGEPHDINTDLLFFMEESDFIPVIAPVCSGENNLTYNVNADLVAGALANAMAAAKLIILTNVSGVTDSNGNLISELSVSHAENLIDNGTAHTGMIPKLQTCVKVVKEGYGSAHIIDGRIPHVLLLELFTIHGTGTMVVNSGV</sequence>
<evidence type="ECO:0000255" key="1">
    <source>
        <dbReference type="HAMAP-Rule" id="MF_00082"/>
    </source>
</evidence>
<gene>
    <name evidence="1" type="primary">argB</name>
    <name type="ordered locus">ERGA_CDS_04600</name>
</gene>
<organism>
    <name type="scientific">Ehrlichia ruminantium (strain Gardel)</name>
    <dbReference type="NCBI Taxonomy" id="302409"/>
    <lineage>
        <taxon>Bacteria</taxon>
        <taxon>Pseudomonadati</taxon>
        <taxon>Pseudomonadota</taxon>
        <taxon>Alphaproteobacteria</taxon>
        <taxon>Rickettsiales</taxon>
        <taxon>Anaplasmataceae</taxon>
        <taxon>Ehrlichia</taxon>
    </lineage>
</organism>
<proteinExistence type="inferred from homology"/>
<keyword id="KW-0028">Amino-acid biosynthesis</keyword>
<keyword id="KW-0055">Arginine biosynthesis</keyword>
<keyword id="KW-0067">ATP-binding</keyword>
<keyword id="KW-0963">Cytoplasm</keyword>
<keyword id="KW-0418">Kinase</keyword>
<keyword id="KW-0547">Nucleotide-binding</keyword>
<keyword id="KW-0808">Transferase</keyword>
<comment type="function">
    <text evidence="1">Catalyzes the ATP-dependent phosphorylation of N-acetyl-L-glutamate.</text>
</comment>
<comment type="catalytic activity">
    <reaction evidence="1">
        <text>N-acetyl-L-glutamate + ATP = N-acetyl-L-glutamyl 5-phosphate + ADP</text>
        <dbReference type="Rhea" id="RHEA:14629"/>
        <dbReference type="ChEBI" id="CHEBI:30616"/>
        <dbReference type="ChEBI" id="CHEBI:44337"/>
        <dbReference type="ChEBI" id="CHEBI:57936"/>
        <dbReference type="ChEBI" id="CHEBI:456216"/>
        <dbReference type="EC" id="2.7.2.8"/>
    </reaction>
</comment>
<comment type="pathway">
    <text evidence="1">Amino-acid biosynthesis; L-arginine biosynthesis; N(2)-acetyl-L-ornithine from L-glutamate: step 2/4.</text>
</comment>
<comment type="subcellular location">
    <subcellularLocation>
        <location evidence="1">Cytoplasm</location>
    </subcellularLocation>
</comment>
<comment type="similarity">
    <text evidence="1">Belongs to the acetylglutamate kinase family. ArgB subfamily.</text>
</comment>
<protein>
    <recommendedName>
        <fullName evidence="1">Acetylglutamate kinase</fullName>
        <ecNumber evidence="1">2.7.2.8</ecNumber>
    </recommendedName>
    <alternativeName>
        <fullName evidence="1">N-acetyl-L-glutamate 5-phosphotransferase</fullName>
    </alternativeName>
    <alternativeName>
        <fullName evidence="1">NAG kinase</fullName>
        <shortName evidence="1">NAGK</shortName>
    </alternativeName>
</protein>